<proteinExistence type="inferred from homology"/>
<protein>
    <recommendedName>
        <fullName evidence="1">Large ribosomal subunit protein bL32</fullName>
    </recommendedName>
    <alternativeName>
        <fullName evidence="3">50S ribosomal protein L32</fullName>
    </alternativeName>
</protein>
<dbReference type="EMBL" id="CP000607">
    <property type="protein sequence ID" value="ABP36225.1"/>
    <property type="molecule type" value="Genomic_DNA"/>
</dbReference>
<dbReference type="SMR" id="A4SCL6"/>
<dbReference type="STRING" id="290318.Cvib_0202"/>
<dbReference type="KEGG" id="pvi:Cvib_0202"/>
<dbReference type="eggNOG" id="COG0333">
    <property type="taxonomic scope" value="Bacteria"/>
</dbReference>
<dbReference type="HOGENOM" id="CLU_129084_1_3_10"/>
<dbReference type="OrthoDB" id="9812874at2"/>
<dbReference type="GO" id="GO:0015934">
    <property type="term" value="C:large ribosomal subunit"/>
    <property type="evidence" value="ECO:0007669"/>
    <property type="project" value="InterPro"/>
</dbReference>
<dbReference type="GO" id="GO:0003735">
    <property type="term" value="F:structural constituent of ribosome"/>
    <property type="evidence" value="ECO:0007669"/>
    <property type="project" value="InterPro"/>
</dbReference>
<dbReference type="GO" id="GO:0006412">
    <property type="term" value="P:translation"/>
    <property type="evidence" value="ECO:0007669"/>
    <property type="project" value="UniProtKB-UniRule"/>
</dbReference>
<dbReference type="HAMAP" id="MF_00340">
    <property type="entry name" value="Ribosomal_bL32"/>
    <property type="match status" value="1"/>
</dbReference>
<dbReference type="InterPro" id="IPR002677">
    <property type="entry name" value="Ribosomal_bL32"/>
</dbReference>
<dbReference type="InterPro" id="IPR044957">
    <property type="entry name" value="Ribosomal_bL32_bact"/>
</dbReference>
<dbReference type="InterPro" id="IPR011332">
    <property type="entry name" value="Ribosomal_zn-bd"/>
</dbReference>
<dbReference type="NCBIfam" id="TIGR01031">
    <property type="entry name" value="rpmF_bact"/>
    <property type="match status" value="1"/>
</dbReference>
<dbReference type="PANTHER" id="PTHR35534">
    <property type="entry name" value="50S RIBOSOMAL PROTEIN L32"/>
    <property type="match status" value="1"/>
</dbReference>
<dbReference type="PANTHER" id="PTHR35534:SF1">
    <property type="entry name" value="LARGE RIBOSOMAL SUBUNIT PROTEIN BL32"/>
    <property type="match status" value="1"/>
</dbReference>
<dbReference type="Pfam" id="PF01783">
    <property type="entry name" value="Ribosomal_L32p"/>
    <property type="match status" value="1"/>
</dbReference>
<dbReference type="SUPFAM" id="SSF57829">
    <property type="entry name" value="Zn-binding ribosomal proteins"/>
    <property type="match status" value="1"/>
</dbReference>
<evidence type="ECO:0000255" key="1">
    <source>
        <dbReference type="HAMAP-Rule" id="MF_00340"/>
    </source>
</evidence>
<evidence type="ECO:0000256" key="2">
    <source>
        <dbReference type="SAM" id="MobiDB-lite"/>
    </source>
</evidence>
<evidence type="ECO:0000305" key="3"/>
<feature type="chain" id="PRO_1000079338" description="Large ribosomal subunit protein bL32">
    <location>
        <begin position="1"/>
        <end position="63"/>
    </location>
</feature>
<feature type="region of interest" description="Disordered" evidence="2">
    <location>
        <begin position="1"/>
        <end position="25"/>
    </location>
</feature>
<feature type="compositionally biased region" description="Basic residues" evidence="2">
    <location>
        <begin position="1"/>
        <end position="18"/>
    </location>
</feature>
<sequence length="63" mass="6941">MAHPKAKVSKSRRDKRRAQFNARTKAATTVNCPNCGEPTLPHRACRHCGHYRGRAVVAKAANS</sequence>
<comment type="similarity">
    <text evidence="1">Belongs to the bacterial ribosomal protein bL32 family.</text>
</comment>
<name>RL32_CHLPM</name>
<reference key="1">
    <citation type="submission" date="2007-03" db="EMBL/GenBank/DDBJ databases">
        <title>Complete sequence of Prosthecochloris vibrioformis DSM 265.</title>
        <authorList>
            <consortium name="US DOE Joint Genome Institute"/>
            <person name="Copeland A."/>
            <person name="Lucas S."/>
            <person name="Lapidus A."/>
            <person name="Barry K."/>
            <person name="Detter J.C."/>
            <person name="Glavina del Rio T."/>
            <person name="Hammon N."/>
            <person name="Israni S."/>
            <person name="Pitluck S."/>
            <person name="Schmutz J."/>
            <person name="Larimer F."/>
            <person name="Land M."/>
            <person name="Hauser L."/>
            <person name="Mikhailova N."/>
            <person name="Li T."/>
            <person name="Overmann J."/>
            <person name="Schuster S.C."/>
            <person name="Bryant D.A."/>
            <person name="Richardson P."/>
        </authorList>
    </citation>
    <scope>NUCLEOTIDE SEQUENCE [LARGE SCALE GENOMIC DNA]</scope>
    <source>
        <strain>DSM 265 / 1930</strain>
    </source>
</reference>
<organism>
    <name type="scientific">Chlorobium phaeovibrioides (strain DSM 265 / 1930)</name>
    <name type="common">Prosthecochloris vibrioformis (strain DSM 265)</name>
    <dbReference type="NCBI Taxonomy" id="290318"/>
    <lineage>
        <taxon>Bacteria</taxon>
        <taxon>Pseudomonadati</taxon>
        <taxon>Chlorobiota</taxon>
        <taxon>Chlorobiia</taxon>
        <taxon>Chlorobiales</taxon>
        <taxon>Chlorobiaceae</taxon>
        <taxon>Chlorobium/Pelodictyon group</taxon>
        <taxon>Chlorobium</taxon>
    </lineage>
</organism>
<keyword id="KW-0687">Ribonucleoprotein</keyword>
<keyword id="KW-0689">Ribosomal protein</keyword>
<accession>A4SCL6</accession>
<gene>
    <name evidence="1" type="primary">rpmF</name>
    <name type="ordered locus">Cvib_0202</name>
</gene>